<reference key="1">
    <citation type="journal article" date="2009" name="PLoS Genet.">
        <title>Organised genome dynamics in the Escherichia coli species results in highly diverse adaptive paths.</title>
        <authorList>
            <person name="Touchon M."/>
            <person name="Hoede C."/>
            <person name="Tenaillon O."/>
            <person name="Barbe V."/>
            <person name="Baeriswyl S."/>
            <person name="Bidet P."/>
            <person name="Bingen E."/>
            <person name="Bonacorsi S."/>
            <person name="Bouchier C."/>
            <person name="Bouvet O."/>
            <person name="Calteau A."/>
            <person name="Chiapello H."/>
            <person name="Clermont O."/>
            <person name="Cruveiller S."/>
            <person name="Danchin A."/>
            <person name="Diard M."/>
            <person name="Dossat C."/>
            <person name="Karoui M.E."/>
            <person name="Frapy E."/>
            <person name="Garry L."/>
            <person name="Ghigo J.M."/>
            <person name="Gilles A.M."/>
            <person name="Johnson J."/>
            <person name="Le Bouguenec C."/>
            <person name="Lescat M."/>
            <person name="Mangenot S."/>
            <person name="Martinez-Jehanne V."/>
            <person name="Matic I."/>
            <person name="Nassif X."/>
            <person name="Oztas S."/>
            <person name="Petit M.A."/>
            <person name="Pichon C."/>
            <person name="Rouy Z."/>
            <person name="Ruf C.S."/>
            <person name="Schneider D."/>
            <person name="Tourret J."/>
            <person name="Vacherie B."/>
            <person name="Vallenet D."/>
            <person name="Medigue C."/>
            <person name="Rocha E.P.C."/>
            <person name="Denamur E."/>
        </authorList>
    </citation>
    <scope>NUCLEOTIDE SEQUENCE [LARGE SCALE GENOMIC DNA]</scope>
    <source>
        <strain>55989 / EAEC</strain>
    </source>
</reference>
<name>GLPG_ECO55</name>
<protein>
    <recommendedName>
        <fullName evidence="1">Rhomboid protease GlpG</fullName>
        <ecNumber evidence="1">3.4.21.105</ecNumber>
    </recommendedName>
    <alternativeName>
        <fullName evidence="1">Intramembrane serine protease</fullName>
    </alternativeName>
</protein>
<sequence>MLMITSFANPRVAQAFVDYMATQGVILTIQQHNQSDVWLADESQAERVRAELARFLENPADPRYLAASWQAGHTGSGLHYRRYPFFAALRERAGPVTWVVMIACVVVFIAMQILGDQEVMLWLAWPFDPTLKFEFWRYFTHALMHFSLMHILFNLLWWWYLGGAVEKRLGSGKLIVITLISALLSGYVQQKFSGPWFGGLSGVVYALMGYVWLRGERDPQSGIYLQRGLIIFALIWIVAGWFDLFGMSMANGAHIAGLAVGLAMAFVDSLNARKRK</sequence>
<accession>B7L4V0</accession>
<dbReference type="EC" id="3.4.21.105" evidence="1"/>
<dbReference type="EMBL" id="CU928145">
    <property type="protein sequence ID" value="CAV00201.1"/>
    <property type="molecule type" value="Genomic_DNA"/>
</dbReference>
<dbReference type="RefSeq" id="WP_000928731.1">
    <property type="nucleotide sequence ID" value="NC_011748.1"/>
</dbReference>
<dbReference type="SMR" id="B7L4V0"/>
<dbReference type="MEROPS" id="S54.016"/>
<dbReference type="GeneID" id="75202266"/>
<dbReference type="KEGG" id="eck:EC55989_3831"/>
<dbReference type="HOGENOM" id="CLU_058989_0_0_6"/>
<dbReference type="Proteomes" id="UP000000746">
    <property type="component" value="Chromosome"/>
</dbReference>
<dbReference type="GO" id="GO:0005886">
    <property type="term" value="C:plasma membrane"/>
    <property type="evidence" value="ECO:0007669"/>
    <property type="project" value="UniProtKB-SubCell"/>
</dbReference>
<dbReference type="GO" id="GO:0004252">
    <property type="term" value="F:serine-type endopeptidase activity"/>
    <property type="evidence" value="ECO:0007669"/>
    <property type="project" value="UniProtKB-UniRule"/>
</dbReference>
<dbReference type="GO" id="GO:0006508">
    <property type="term" value="P:proteolysis"/>
    <property type="evidence" value="ECO:0007669"/>
    <property type="project" value="UniProtKB-UniRule"/>
</dbReference>
<dbReference type="FunFam" id="1.20.1540.10:FF:000003">
    <property type="entry name" value="Rhomboid protease GlpG"/>
    <property type="match status" value="1"/>
</dbReference>
<dbReference type="FunFam" id="3.30.70.2350:FF:000001">
    <property type="entry name" value="Rhomboid protease GlpG"/>
    <property type="match status" value="1"/>
</dbReference>
<dbReference type="Gene3D" id="3.30.70.2350">
    <property type="match status" value="1"/>
</dbReference>
<dbReference type="Gene3D" id="1.20.1540.10">
    <property type="entry name" value="Rhomboid-like"/>
    <property type="match status" value="1"/>
</dbReference>
<dbReference type="HAMAP" id="MF_01594">
    <property type="entry name" value="Rhomboid_GlpG"/>
    <property type="match status" value="1"/>
</dbReference>
<dbReference type="InterPro" id="IPR038236">
    <property type="entry name" value="GlpG_N_sf"/>
</dbReference>
<dbReference type="InterPro" id="IPR022732">
    <property type="entry name" value="Peptidase_S54_GlpG_N"/>
</dbReference>
<dbReference type="InterPro" id="IPR022764">
    <property type="entry name" value="Peptidase_S54_rhomboid_dom"/>
</dbReference>
<dbReference type="InterPro" id="IPR035952">
    <property type="entry name" value="Rhomboid-like_sf"/>
</dbReference>
<dbReference type="InterPro" id="IPR023662">
    <property type="entry name" value="Rhomboid_protease_GlpG"/>
</dbReference>
<dbReference type="NCBIfam" id="NF008155">
    <property type="entry name" value="PRK10907.1"/>
    <property type="match status" value="1"/>
</dbReference>
<dbReference type="NCBIfam" id="TIGR04239">
    <property type="entry name" value="rhombo_GlpG"/>
    <property type="match status" value="1"/>
</dbReference>
<dbReference type="PANTHER" id="PTHR43066:SF26">
    <property type="entry name" value="RHOMBOID PROTEASE GLPG"/>
    <property type="match status" value="1"/>
</dbReference>
<dbReference type="PANTHER" id="PTHR43066">
    <property type="entry name" value="RHOMBOID-RELATED PROTEIN"/>
    <property type="match status" value="1"/>
</dbReference>
<dbReference type="Pfam" id="PF01694">
    <property type="entry name" value="Rhomboid"/>
    <property type="match status" value="1"/>
</dbReference>
<dbReference type="Pfam" id="PF12122">
    <property type="entry name" value="Rhomboid_N"/>
    <property type="match status" value="1"/>
</dbReference>
<dbReference type="SUPFAM" id="SSF144091">
    <property type="entry name" value="Rhomboid-like"/>
    <property type="match status" value="1"/>
</dbReference>
<evidence type="ECO:0000255" key="1">
    <source>
        <dbReference type="HAMAP-Rule" id="MF_01594"/>
    </source>
</evidence>
<comment type="function">
    <text evidence="1">Rhomboid-type serine protease that catalyzes intramembrane proteolysis.</text>
</comment>
<comment type="catalytic activity">
    <reaction evidence="1">
        <text>Cleaves type-1 transmembrane domains using a catalytic dyad composed of serine and histidine that are contributed by different transmembrane domains.</text>
        <dbReference type="EC" id="3.4.21.105"/>
    </reaction>
</comment>
<comment type="subcellular location">
    <subcellularLocation>
        <location evidence="1">Cell inner membrane</location>
        <topology evidence="1">Multi-pass membrane protein</topology>
    </subcellularLocation>
</comment>
<comment type="similarity">
    <text evidence="1">Belongs to the peptidase S54 family.</text>
</comment>
<proteinExistence type="inferred from homology"/>
<gene>
    <name evidence="1" type="primary">glpG</name>
    <name type="ordered locus">EC55989_3831</name>
</gene>
<feature type="chain" id="PRO_1000185712" description="Rhomboid protease GlpG">
    <location>
        <begin position="1"/>
        <end position="276"/>
    </location>
</feature>
<feature type="transmembrane region" description="Helical" evidence="1">
    <location>
        <begin position="94"/>
        <end position="114"/>
    </location>
</feature>
<feature type="transmembrane region" description="Helical" evidence="1">
    <location>
        <begin position="142"/>
        <end position="162"/>
    </location>
</feature>
<feature type="transmembrane region" description="Helical" evidence="1">
    <location>
        <begin position="169"/>
        <end position="189"/>
    </location>
</feature>
<feature type="transmembrane region" description="Helical" evidence="1">
    <location>
        <begin position="192"/>
        <end position="212"/>
    </location>
</feature>
<feature type="transmembrane region" description="Helical" evidence="1">
    <location>
        <begin position="229"/>
        <end position="249"/>
    </location>
</feature>
<feature type="transmembrane region" description="Helical" evidence="1">
    <location>
        <begin position="250"/>
        <end position="270"/>
    </location>
</feature>
<feature type="active site" description="Nucleophile" evidence="1">
    <location>
        <position position="201"/>
    </location>
</feature>
<feature type="active site" evidence="1">
    <location>
        <position position="254"/>
    </location>
</feature>
<keyword id="KW-0997">Cell inner membrane</keyword>
<keyword id="KW-1003">Cell membrane</keyword>
<keyword id="KW-0378">Hydrolase</keyword>
<keyword id="KW-0472">Membrane</keyword>
<keyword id="KW-0645">Protease</keyword>
<keyword id="KW-1185">Reference proteome</keyword>
<keyword id="KW-0720">Serine protease</keyword>
<keyword id="KW-0812">Transmembrane</keyword>
<keyword id="KW-1133">Transmembrane helix</keyword>
<organism>
    <name type="scientific">Escherichia coli (strain 55989 / EAEC)</name>
    <dbReference type="NCBI Taxonomy" id="585055"/>
    <lineage>
        <taxon>Bacteria</taxon>
        <taxon>Pseudomonadati</taxon>
        <taxon>Pseudomonadota</taxon>
        <taxon>Gammaproteobacteria</taxon>
        <taxon>Enterobacterales</taxon>
        <taxon>Enterobacteriaceae</taxon>
        <taxon>Escherichia</taxon>
    </lineage>
</organism>